<proteinExistence type="inferred from homology"/>
<organism>
    <name type="scientific">Burkholderia lata (strain ATCC 17760 / DSM 23089 / LMG 22485 / NCIMB 9086 / R18194 / 383)</name>
    <dbReference type="NCBI Taxonomy" id="482957"/>
    <lineage>
        <taxon>Bacteria</taxon>
        <taxon>Pseudomonadati</taxon>
        <taxon>Pseudomonadota</taxon>
        <taxon>Betaproteobacteria</taxon>
        <taxon>Burkholderiales</taxon>
        <taxon>Burkholderiaceae</taxon>
        <taxon>Burkholderia</taxon>
        <taxon>Burkholderia cepacia complex</taxon>
    </lineage>
</organism>
<reference key="1">
    <citation type="submission" date="2005-10" db="EMBL/GenBank/DDBJ databases">
        <title>Complete sequence of chromosome 1 of Burkholderia sp. 383.</title>
        <authorList>
            <consortium name="US DOE Joint Genome Institute"/>
            <person name="Copeland A."/>
            <person name="Lucas S."/>
            <person name="Lapidus A."/>
            <person name="Barry K."/>
            <person name="Detter J.C."/>
            <person name="Glavina T."/>
            <person name="Hammon N."/>
            <person name="Israni S."/>
            <person name="Pitluck S."/>
            <person name="Chain P."/>
            <person name="Malfatti S."/>
            <person name="Shin M."/>
            <person name="Vergez L."/>
            <person name="Schmutz J."/>
            <person name="Larimer F."/>
            <person name="Land M."/>
            <person name="Kyrpides N."/>
            <person name="Lykidis A."/>
            <person name="Richardson P."/>
        </authorList>
    </citation>
    <scope>NUCLEOTIDE SEQUENCE [LARGE SCALE GENOMIC DNA]</scope>
    <source>
        <strain>ATCC 17760 / DSM 23089 / LMG 22485 / NCIMB 9086 / R18194 / 383</strain>
    </source>
</reference>
<keyword id="KW-0963">Cytoplasm</keyword>
<keyword id="KW-0369">Histidine metabolism</keyword>
<keyword id="KW-0378">Hydrolase</keyword>
<keyword id="KW-0408">Iron</keyword>
<keyword id="KW-0479">Metal-binding</keyword>
<keyword id="KW-0862">Zinc</keyword>
<sequence>MKPTVWHHLRLCPHGHPDETIDDAAIAVDETGTIVWLGAMSALPHGYAHWQREDLHGAWVTPGLVDCHTHLVYGGTRADEFAQRLAGVSYEEIARQGGGIVSTVRATRAADETTLFVQAAARLQPLLAEGVTAIEIKSGYGLDLASERKMLRVARQLGERFPVTVYTTFLGAHALPPEYAGRADAYIDEVCDRMLPALADEGLVDAVDVFCERIGFSLAQTERVFEAATRRGLPVKLHAEQLSNAGGTALAARYRALSADHLEFLDEAGIEAMKAAGTVAVLLPGAYYFIRETQLPPIELLRKHGVPIALATDHNPGTSPLESLLLTLNMGCTLFRMTVPEVLQGVTRHAAAALGRADRHGALEVGRQADFAAWSVGSLAELAYWIGRPLCEQVVRGGTTVFRRMNG</sequence>
<name>HUTI_BURL3</name>
<comment type="function">
    <text evidence="1">Catalyzes the hydrolytic cleavage of the carbon-nitrogen bond in imidazolone-5-propanoate to yield N-formimidoyl-L-glutamate. It is the third step in the universal histidine degradation pathway.</text>
</comment>
<comment type="catalytic activity">
    <reaction evidence="1">
        <text>4-imidazolone-5-propanoate + H2O = N-formimidoyl-L-glutamate</text>
        <dbReference type="Rhea" id="RHEA:23660"/>
        <dbReference type="ChEBI" id="CHEBI:15377"/>
        <dbReference type="ChEBI" id="CHEBI:58928"/>
        <dbReference type="ChEBI" id="CHEBI:77893"/>
        <dbReference type="EC" id="3.5.2.7"/>
    </reaction>
</comment>
<comment type="cofactor">
    <cofactor evidence="1">
        <name>Zn(2+)</name>
        <dbReference type="ChEBI" id="CHEBI:29105"/>
    </cofactor>
    <cofactor evidence="1">
        <name>Fe(3+)</name>
        <dbReference type="ChEBI" id="CHEBI:29034"/>
    </cofactor>
    <text evidence="1">Binds 1 zinc or iron ion per subunit.</text>
</comment>
<comment type="pathway">
    <text evidence="1">Amino-acid degradation; L-histidine degradation into L-glutamate; N-formimidoyl-L-glutamate from L-histidine: step 3/3.</text>
</comment>
<comment type="subcellular location">
    <subcellularLocation>
        <location evidence="1">Cytoplasm</location>
    </subcellularLocation>
</comment>
<comment type="similarity">
    <text evidence="1">Belongs to the metallo-dependent hydrolases superfamily. HutI family.</text>
</comment>
<evidence type="ECO:0000255" key="1">
    <source>
        <dbReference type="HAMAP-Rule" id="MF_00372"/>
    </source>
</evidence>
<gene>
    <name evidence="1" type="primary">hutI</name>
    <name type="ordered locus">Bcep18194_A5478</name>
</gene>
<dbReference type="EC" id="3.5.2.7" evidence="1"/>
<dbReference type="EMBL" id="CP000151">
    <property type="protein sequence ID" value="ABB09072.1"/>
    <property type="molecule type" value="Genomic_DNA"/>
</dbReference>
<dbReference type="RefSeq" id="WP_011352606.1">
    <property type="nucleotide sequence ID" value="NZ_WNDV01000029.1"/>
</dbReference>
<dbReference type="SMR" id="Q39EP4"/>
<dbReference type="GeneID" id="45095359"/>
<dbReference type="KEGG" id="bur:Bcep18194_A5478"/>
<dbReference type="PATRIC" id="fig|482957.22.peg.2433"/>
<dbReference type="HOGENOM" id="CLU_041647_0_0_4"/>
<dbReference type="UniPathway" id="UPA00379">
    <property type="reaction ID" value="UER00551"/>
</dbReference>
<dbReference type="Proteomes" id="UP000002705">
    <property type="component" value="Chromosome 1"/>
</dbReference>
<dbReference type="GO" id="GO:0005737">
    <property type="term" value="C:cytoplasm"/>
    <property type="evidence" value="ECO:0007669"/>
    <property type="project" value="UniProtKB-SubCell"/>
</dbReference>
<dbReference type="GO" id="GO:0050480">
    <property type="term" value="F:imidazolonepropionase activity"/>
    <property type="evidence" value="ECO:0007669"/>
    <property type="project" value="UniProtKB-UniRule"/>
</dbReference>
<dbReference type="GO" id="GO:0005506">
    <property type="term" value="F:iron ion binding"/>
    <property type="evidence" value="ECO:0007669"/>
    <property type="project" value="UniProtKB-UniRule"/>
</dbReference>
<dbReference type="GO" id="GO:0008270">
    <property type="term" value="F:zinc ion binding"/>
    <property type="evidence" value="ECO:0007669"/>
    <property type="project" value="UniProtKB-UniRule"/>
</dbReference>
<dbReference type="GO" id="GO:0019556">
    <property type="term" value="P:L-histidine catabolic process to glutamate and formamide"/>
    <property type="evidence" value="ECO:0007669"/>
    <property type="project" value="UniProtKB-UniPathway"/>
</dbReference>
<dbReference type="GO" id="GO:0019557">
    <property type="term" value="P:L-histidine catabolic process to glutamate and formate"/>
    <property type="evidence" value="ECO:0007669"/>
    <property type="project" value="UniProtKB-UniPathway"/>
</dbReference>
<dbReference type="CDD" id="cd01296">
    <property type="entry name" value="Imidazolone-5PH"/>
    <property type="match status" value="1"/>
</dbReference>
<dbReference type="FunFam" id="3.20.20.140:FF:000007">
    <property type="entry name" value="Imidazolonepropionase"/>
    <property type="match status" value="1"/>
</dbReference>
<dbReference type="Gene3D" id="3.20.20.140">
    <property type="entry name" value="Metal-dependent hydrolases"/>
    <property type="match status" value="1"/>
</dbReference>
<dbReference type="Gene3D" id="2.30.40.10">
    <property type="entry name" value="Urease, subunit C, domain 1"/>
    <property type="match status" value="1"/>
</dbReference>
<dbReference type="HAMAP" id="MF_00372">
    <property type="entry name" value="HutI"/>
    <property type="match status" value="1"/>
</dbReference>
<dbReference type="InterPro" id="IPR006680">
    <property type="entry name" value="Amidohydro-rel"/>
</dbReference>
<dbReference type="InterPro" id="IPR005920">
    <property type="entry name" value="HutI"/>
</dbReference>
<dbReference type="InterPro" id="IPR011059">
    <property type="entry name" value="Metal-dep_hydrolase_composite"/>
</dbReference>
<dbReference type="InterPro" id="IPR032466">
    <property type="entry name" value="Metal_Hydrolase"/>
</dbReference>
<dbReference type="NCBIfam" id="TIGR01224">
    <property type="entry name" value="hutI"/>
    <property type="match status" value="1"/>
</dbReference>
<dbReference type="PANTHER" id="PTHR42752">
    <property type="entry name" value="IMIDAZOLONEPROPIONASE"/>
    <property type="match status" value="1"/>
</dbReference>
<dbReference type="PANTHER" id="PTHR42752:SF1">
    <property type="entry name" value="IMIDAZOLONEPROPIONASE-RELATED"/>
    <property type="match status" value="1"/>
</dbReference>
<dbReference type="Pfam" id="PF01979">
    <property type="entry name" value="Amidohydro_1"/>
    <property type="match status" value="1"/>
</dbReference>
<dbReference type="SUPFAM" id="SSF51338">
    <property type="entry name" value="Composite domain of metallo-dependent hydrolases"/>
    <property type="match status" value="1"/>
</dbReference>
<dbReference type="SUPFAM" id="SSF51556">
    <property type="entry name" value="Metallo-dependent hydrolases"/>
    <property type="match status" value="1"/>
</dbReference>
<feature type="chain" id="PRO_0000306453" description="Imidazolonepropionase">
    <location>
        <begin position="1"/>
        <end position="407"/>
    </location>
</feature>
<feature type="binding site" evidence="1">
    <location>
        <position position="68"/>
    </location>
    <ligand>
        <name>Fe(3+)</name>
        <dbReference type="ChEBI" id="CHEBI:29034"/>
    </ligand>
</feature>
<feature type="binding site" evidence="1">
    <location>
        <position position="68"/>
    </location>
    <ligand>
        <name>Zn(2+)</name>
        <dbReference type="ChEBI" id="CHEBI:29105"/>
    </ligand>
</feature>
<feature type="binding site" evidence="1">
    <location>
        <position position="70"/>
    </location>
    <ligand>
        <name>Fe(3+)</name>
        <dbReference type="ChEBI" id="CHEBI:29034"/>
    </ligand>
</feature>
<feature type="binding site" evidence="1">
    <location>
        <position position="70"/>
    </location>
    <ligand>
        <name>Zn(2+)</name>
        <dbReference type="ChEBI" id="CHEBI:29105"/>
    </ligand>
</feature>
<feature type="binding site" evidence="1">
    <location>
        <position position="77"/>
    </location>
    <ligand>
        <name>4-imidazolone-5-propanoate</name>
        <dbReference type="ChEBI" id="CHEBI:77893"/>
    </ligand>
</feature>
<feature type="binding site" evidence="1">
    <location>
        <position position="140"/>
    </location>
    <ligand>
        <name>4-imidazolone-5-propanoate</name>
        <dbReference type="ChEBI" id="CHEBI:77893"/>
    </ligand>
</feature>
<feature type="binding site" evidence="1">
    <location>
        <position position="140"/>
    </location>
    <ligand>
        <name>N-formimidoyl-L-glutamate</name>
        <dbReference type="ChEBI" id="CHEBI:58928"/>
    </ligand>
</feature>
<feature type="binding site" evidence="1">
    <location>
        <position position="173"/>
    </location>
    <ligand>
        <name>4-imidazolone-5-propanoate</name>
        <dbReference type="ChEBI" id="CHEBI:77893"/>
    </ligand>
</feature>
<feature type="binding site" evidence="1">
    <location>
        <position position="238"/>
    </location>
    <ligand>
        <name>Fe(3+)</name>
        <dbReference type="ChEBI" id="CHEBI:29034"/>
    </ligand>
</feature>
<feature type="binding site" evidence="1">
    <location>
        <position position="238"/>
    </location>
    <ligand>
        <name>Zn(2+)</name>
        <dbReference type="ChEBI" id="CHEBI:29105"/>
    </ligand>
</feature>
<feature type="binding site" evidence="1">
    <location>
        <position position="241"/>
    </location>
    <ligand>
        <name>4-imidazolone-5-propanoate</name>
        <dbReference type="ChEBI" id="CHEBI:77893"/>
    </ligand>
</feature>
<feature type="binding site" evidence="1">
    <location>
        <position position="313"/>
    </location>
    <ligand>
        <name>Fe(3+)</name>
        <dbReference type="ChEBI" id="CHEBI:29034"/>
    </ligand>
</feature>
<feature type="binding site" evidence="1">
    <location>
        <position position="313"/>
    </location>
    <ligand>
        <name>Zn(2+)</name>
        <dbReference type="ChEBI" id="CHEBI:29105"/>
    </ligand>
</feature>
<feature type="binding site" evidence="1">
    <location>
        <position position="315"/>
    </location>
    <ligand>
        <name>N-formimidoyl-L-glutamate</name>
        <dbReference type="ChEBI" id="CHEBI:58928"/>
    </ligand>
</feature>
<feature type="binding site" evidence="1">
    <location>
        <position position="317"/>
    </location>
    <ligand>
        <name>N-formimidoyl-L-glutamate</name>
        <dbReference type="ChEBI" id="CHEBI:58928"/>
    </ligand>
</feature>
<feature type="binding site" evidence="1">
    <location>
        <position position="318"/>
    </location>
    <ligand>
        <name>4-imidazolone-5-propanoate</name>
        <dbReference type="ChEBI" id="CHEBI:77893"/>
    </ligand>
</feature>
<protein>
    <recommendedName>
        <fullName evidence="1">Imidazolonepropionase</fullName>
        <ecNumber evidence="1">3.5.2.7</ecNumber>
    </recommendedName>
    <alternativeName>
        <fullName evidence="1">Imidazolone-5-propionate hydrolase</fullName>
    </alternativeName>
</protein>
<accession>Q39EP4</accession>